<keyword id="KW-0067">ATP-binding</keyword>
<keyword id="KW-0963">Cytoplasm</keyword>
<keyword id="KW-1015">Disulfide bond</keyword>
<keyword id="KW-0547">Nucleotide-binding</keyword>
<keyword id="KW-0676">Redox-active center</keyword>
<keyword id="KW-0694">RNA-binding</keyword>
<keyword id="KW-0784">Thiamine biosynthesis</keyword>
<keyword id="KW-0808">Transferase</keyword>
<keyword id="KW-0820">tRNA-binding</keyword>
<gene>
    <name evidence="1" type="primary">thiI</name>
    <name type="ordered locus">KPK_4309</name>
</gene>
<reference key="1">
    <citation type="journal article" date="2008" name="PLoS Genet.">
        <title>Complete genome sequence of the N2-fixing broad host range endophyte Klebsiella pneumoniae 342 and virulence predictions verified in mice.</title>
        <authorList>
            <person name="Fouts D.E."/>
            <person name="Tyler H.L."/>
            <person name="DeBoy R.T."/>
            <person name="Daugherty S."/>
            <person name="Ren Q."/>
            <person name="Badger J.H."/>
            <person name="Durkin A.S."/>
            <person name="Huot H."/>
            <person name="Shrivastava S."/>
            <person name="Kothari S."/>
            <person name="Dodson R.J."/>
            <person name="Mohamoud Y."/>
            <person name="Khouri H."/>
            <person name="Roesch L.F.W."/>
            <person name="Krogfelt K.A."/>
            <person name="Struve C."/>
            <person name="Triplett E.W."/>
            <person name="Methe B.A."/>
        </authorList>
    </citation>
    <scope>NUCLEOTIDE SEQUENCE [LARGE SCALE GENOMIC DNA]</scope>
    <source>
        <strain>342</strain>
    </source>
</reference>
<name>THII_KLEP3</name>
<sequence>MKFIIKLFPEITIKSQSVRLRFIKILTGNIRNVLKNYDETLAVVRHWDHIEVRAKDENQRPAIRDALTRIPGIHHILEVEDVPFTSLHDIFEKTLPLWREALEGKTFCVRVKRRGKHEFTSIEVERYVGGGLNQHIETARVKLTDPDVTVNLEIENDRLLLVKGRYEGIGGFPIGTQEDVLSLISGGFDSGVSSYMLMRRGCRVHYCFFNLGGAAHEIGVRQVAHYLWNRFGSSHRVRFVAINFEPVVGEILEKVDDGQMGVVLKRMMVRAASKVAERYGVQALVTGEALGQVSSQTLTNLRLIDNVSDTLILRPLISHDKEHIIDLAREIGTEDFARTMPEYCGVISKSPTVKAVKAKIEAEEEHFDFSILDKVVEEASNIDIRDIAQQTEAAVVEVETVTGFGANDAILDIRSIDEQEDKPLKVEGVEVVSLPFYKLSTKFGDLDQSKTWLLWCERGVMSRLQALYLREQGFSNVKVYRP</sequence>
<dbReference type="EC" id="2.8.1.4" evidence="1"/>
<dbReference type="EMBL" id="CP000964">
    <property type="protein sequence ID" value="ACI10479.1"/>
    <property type="molecule type" value="Genomic_DNA"/>
</dbReference>
<dbReference type="SMR" id="B5Y0W8"/>
<dbReference type="KEGG" id="kpe:KPK_4309"/>
<dbReference type="HOGENOM" id="CLU_037952_4_1_6"/>
<dbReference type="UniPathway" id="UPA00060"/>
<dbReference type="Proteomes" id="UP000001734">
    <property type="component" value="Chromosome"/>
</dbReference>
<dbReference type="GO" id="GO:0005829">
    <property type="term" value="C:cytosol"/>
    <property type="evidence" value="ECO:0007669"/>
    <property type="project" value="TreeGrafter"/>
</dbReference>
<dbReference type="GO" id="GO:0005524">
    <property type="term" value="F:ATP binding"/>
    <property type="evidence" value="ECO:0007669"/>
    <property type="project" value="UniProtKB-UniRule"/>
</dbReference>
<dbReference type="GO" id="GO:0004810">
    <property type="term" value="F:CCA tRNA nucleotidyltransferase activity"/>
    <property type="evidence" value="ECO:0007669"/>
    <property type="project" value="InterPro"/>
</dbReference>
<dbReference type="GO" id="GO:0000049">
    <property type="term" value="F:tRNA binding"/>
    <property type="evidence" value="ECO:0007669"/>
    <property type="project" value="UniProtKB-UniRule"/>
</dbReference>
<dbReference type="GO" id="GO:0140741">
    <property type="term" value="F:tRNA-uracil-4 sulfurtransferase activity"/>
    <property type="evidence" value="ECO:0007669"/>
    <property type="project" value="UniProtKB-EC"/>
</dbReference>
<dbReference type="GO" id="GO:0009228">
    <property type="term" value="P:thiamine biosynthetic process"/>
    <property type="evidence" value="ECO:0007669"/>
    <property type="project" value="UniProtKB-KW"/>
</dbReference>
<dbReference type="GO" id="GO:0009229">
    <property type="term" value="P:thiamine diphosphate biosynthetic process"/>
    <property type="evidence" value="ECO:0007669"/>
    <property type="project" value="UniProtKB-UniRule"/>
</dbReference>
<dbReference type="GO" id="GO:0052837">
    <property type="term" value="P:thiazole biosynthetic process"/>
    <property type="evidence" value="ECO:0007669"/>
    <property type="project" value="InterPro"/>
</dbReference>
<dbReference type="GO" id="GO:0002937">
    <property type="term" value="P:tRNA 4-thiouridine biosynthesis"/>
    <property type="evidence" value="ECO:0007669"/>
    <property type="project" value="TreeGrafter"/>
</dbReference>
<dbReference type="CDD" id="cd01712">
    <property type="entry name" value="PPase_ThiI"/>
    <property type="match status" value="1"/>
</dbReference>
<dbReference type="CDD" id="cd11716">
    <property type="entry name" value="THUMP_ThiI"/>
    <property type="match status" value="1"/>
</dbReference>
<dbReference type="FunFam" id="3.30.2130.30:FF:000002">
    <property type="entry name" value="tRNA sulfurtransferase"/>
    <property type="match status" value="1"/>
</dbReference>
<dbReference type="FunFam" id="3.40.250.10:FF:000003">
    <property type="entry name" value="tRNA sulfurtransferase"/>
    <property type="match status" value="1"/>
</dbReference>
<dbReference type="FunFam" id="3.40.50.620:FF:000029">
    <property type="entry name" value="tRNA sulfurtransferase"/>
    <property type="match status" value="1"/>
</dbReference>
<dbReference type="Gene3D" id="3.30.2130.30">
    <property type="match status" value="1"/>
</dbReference>
<dbReference type="Gene3D" id="3.40.50.620">
    <property type="entry name" value="HUPs"/>
    <property type="match status" value="1"/>
</dbReference>
<dbReference type="Gene3D" id="3.40.250.10">
    <property type="entry name" value="Rhodanese-like domain"/>
    <property type="match status" value="1"/>
</dbReference>
<dbReference type="HAMAP" id="MF_00021">
    <property type="entry name" value="ThiI"/>
    <property type="match status" value="1"/>
</dbReference>
<dbReference type="InterPro" id="IPR001763">
    <property type="entry name" value="Rhodanese-like_dom"/>
</dbReference>
<dbReference type="InterPro" id="IPR036873">
    <property type="entry name" value="Rhodanese-like_dom_sf"/>
</dbReference>
<dbReference type="InterPro" id="IPR014729">
    <property type="entry name" value="Rossmann-like_a/b/a_fold"/>
</dbReference>
<dbReference type="InterPro" id="IPR020536">
    <property type="entry name" value="ThiI_AANH"/>
</dbReference>
<dbReference type="InterPro" id="IPR054173">
    <property type="entry name" value="ThiI_fer"/>
</dbReference>
<dbReference type="InterPro" id="IPR049961">
    <property type="entry name" value="ThiI_N"/>
</dbReference>
<dbReference type="InterPro" id="IPR026340">
    <property type="entry name" value="THII_Thiazole_biosynth_dom"/>
</dbReference>
<dbReference type="InterPro" id="IPR004114">
    <property type="entry name" value="THUMP_dom"/>
</dbReference>
<dbReference type="InterPro" id="IPR049962">
    <property type="entry name" value="THUMP_ThiI"/>
</dbReference>
<dbReference type="InterPro" id="IPR003720">
    <property type="entry name" value="tRNA_STrfase"/>
</dbReference>
<dbReference type="InterPro" id="IPR050102">
    <property type="entry name" value="tRNA_sulfurtransferase_ThiI"/>
</dbReference>
<dbReference type="NCBIfam" id="TIGR04271">
    <property type="entry name" value="ThiI_C_thiazole"/>
    <property type="match status" value="1"/>
</dbReference>
<dbReference type="NCBIfam" id="TIGR00342">
    <property type="entry name" value="tRNA uracil 4-sulfurtransferase ThiI"/>
    <property type="match status" value="1"/>
</dbReference>
<dbReference type="PANTHER" id="PTHR43209">
    <property type="entry name" value="TRNA SULFURTRANSFERASE"/>
    <property type="match status" value="1"/>
</dbReference>
<dbReference type="PANTHER" id="PTHR43209:SF1">
    <property type="entry name" value="TRNA SULFURTRANSFERASE"/>
    <property type="match status" value="1"/>
</dbReference>
<dbReference type="Pfam" id="PF02568">
    <property type="entry name" value="ThiI"/>
    <property type="match status" value="1"/>
</dbReference>
<dbReference type="Pfam" id="PF22025">
    <property type="entry name" value="ThiI_fer"/>
    <property type="match status" value="1"/>
</dbReference>
<dbReference type="Pfam" id="PF02926">
    <property type="entry name" value="THUMP"/>
    <property type="match status" value="1"/>
</dbReference>
<dbReference type="SMART" id="SM00981">
    <property type="entry name" value="THUMP"/>
    <property type="match status" value="1"/>
</dbReference>
<dbReference type="SUPFAM" id="SSF52402">
    <property type="entry name" value="Adenine nucleotide alpha hydrolases-like"/>
    <property type="match status" value="1"/>
</dbReference>
<dbReference type="SUPFAM" id="SSF52821">
    <property type="entry name" value="Rhodanese/Cell cycle control phosphatase"/>
    <property type="match status" value="1"/>
</dbReference>
<dbReference type="SUPFAM" id="SSF143437">
    <property type="entry name" value="THUMP domain-like"/>
    <property type="match status" value="1"/>
</dbReference>
<dbReference type="PROSITE" id="PS50206">
    <property type="entry name" value="RHODANESE_3"/>
    <property type="match status" value="1"/>
</dbReference>
<dbReference type="PROSITE" id="PS51165">
    <property type="entry name" value="THUMP"/>
    <property type="match status" value="1"/>
</dbReference>
<feature type="chain" id="PRO_1000090017" description="tRNA sulfurtransferase">
    <location>
        <begin position="1"/>
        <end position="482"/>
    </location>
</feature>
<feature type="domain" description="THUMP" evidence="1">
    <location>
        <begin position="61"/>
        <end position="165"/>
    </location>
</feature>
<feature type="domain" description="Rhodanese" evidence="1">
    <location>
        <begin position="404"/>
        <end position="482"/>
    </location>
</feature>
<feature type="active site" description="Cysteine persulfide intermediate" evidence="1">
    <location>
        <position position="456"/>
    </location>
</feature>
<feature type="binding site" evidence="1">
    <location>
        <begin position="183"/>
        <end position="184"/>
    </location>
    <ligand>
        <name>ATP</name>
        <dbReference type="ChEBI" id="CHEBI:30616"/>
    </ligand>
</feature>
<feature type="binding site" evidence="1">
    <location>
        <position position="265"/>
    </location>
    <ligand>
        <name>ATP</name>
        <dbReference type="ChEBI" id="CHEBI:30616"/>
    </ligand>
</feature>
<feature type="binding site" evidence="1">
    <location>
        <position position="287"/>
    </location>
    <ligand>
        <name>ATP</name>
        <dbReference type="ChEBI" id="CHEBI:30616"/>
    </ligand>
</feature>
<feature type="binding site" evidence="1">
    <location>
        <position position="296"/>
    </location>
    <ligand>
        <name>ATP</name>
        <dbReference type="ChEBI" id="CHEBI:30616"/>
    </ligand>
</feature>
<feature type="disulfide bond" description="Redox-active" evidence="1">
    <location>
        <begin position="344"/>
        <end position="456"/>
    </location>
</feature>
<protein>
    <recommendedName>
        <fullName evidence="1">tRNA sulfurtransferase</fullName>
        <ecNumber evidence="1">2.8.1.4</ecNumber>
    </recommendedName>
    <alternativeName>
        <fullName evidence="1">Sulfur carrier protein ThiS sulfurtransferase</fullName>
    </alternativeName>
    <alternativeName>
        <fullName evidence="1">Thiamine biosynthesis protein ThiI</fullName>
    </alternativeName>
    <alternativeName>
        <fullName evidence="1">tRNA 4-thiouridine synthase</fullName>
    </alternativeName>
</protein>
<accession>B5Y0W8</accession>
<proteinExistence type="inferred from homology"/>
<organism>
    <name type="scientific">Klebsiella pneumoniae (strain 342)</name>
    <dbReference type="NCBI Taxonomy" id="507522"/>
    <lineage>
        <taxon>Bacteria</taxon>
        <taxon>Pseudomonadati</taxon>
        <taxon>Pseudomonadota</taxon>
        <taxon>Gammaproteobacteria</taxon>
        <taxon>Enterobacterales</taxon>
        <taxon>Enterobacteriaceae</taxon>
        <taxon>Klebsiella/Raoultella group</taxon>
        <taxon>Klebsiella</taxon>
        <taxon>Klebsiella pneumoniae complex</taxon>
    </lineage>
</organism>
<evidence type="ECO:0000255" key="1">
    <source>
        <dbReference type="HAMAP-Rule" id="MF_00021"/>
    </source>
</evidence>
<comment type="function">
    <text evidence="1">Catalyzes the ATP-dependent transfer of a sulfur to tRNA to produce 4-thiouridine in position 8 of tRNAs, which functions as a near-UV photosensor. Also catalyzes the transfer of sulfur to the sulfur carrier protein ThiS, forming ThiS-thiocarboxylate. This is a step in the synthesis of thiazole, in the thiamine biosynthesis pathway. The sulfur is donated as persulfide by IscS.</text>
</comment>
<comment type="catalytic activity">
    <reaction evidence="1">
        <text>[ThiI sulfur-carrier protein]-S-sulfanyl-L-cysteine + a uridine in tRNA + 2 reduced [2Fe-2S]-[ferredoxin] + ATP + H(+) = [ThiI sulfur-carrier protein]-L-cysteine + a 4-thiouridine in tRNA + 2 oxidized [2Fe-2S]-[ferredoxin] + AMP + diphosphate</text>
        <dbReference type="Rhea" id="RHEA:24176"/>
        <dbReference type="Rhea" id="RHEA-COMP:10000"/>
        <dbReference type="Rhea" id="RHEA-COMP:10001"/>
        <dbReference type="Rhea" id="RHEA-COMP:13337"/>
        <dbReference type="Rhea" id="RHEA-COMP:13338"/>
        <dbReference type="Rhea" id="RHEA-COMP:13339"/>
        <dbReference type="Rhea" id="RHEA-COMP:13340"/>
        <dbReference type="ChEBI" id="CHEBI:15378"/>
        <dbReference type="ChEBI" id="CHEBI:29950"/>
        <dbReference type="ChEBI" id="CHEBI:30616"/>
        <dbReference type="ChEBI" id="CHEBI:33019"/>
        <dbReference type="ChEBI" id="CHEBI:33737"/>
        <dbReference type="ChEBI" id="CHEBI:33738"/>
        <dbReference type="ChEBI" id="CHEBI:61963"/>
        <dbReference type="ChEBI" id="CHEBI:65315"/>
        <dbReference type="ChEBI" id="CHEBI:136798"/>
        <dbReference type="ChEBI" id="CHEBI:456215"/>
        <dbReference type="EC" id="2.8.1.4"/>
    </reaction>
</comment>
<comment type="catalytic activity">
    <reaction evidence="1">
        <text>[ThiS sulfur-carrier protein]-C-terminal Gly-Gly-AMP + S-sulfanyl-L-cysteinyl-[cysteine desulfurase] + AH2 = [ThiS sulfur-carrier protein]-C-terminal-Gly-aminoethanethioate + L-cysteinyl-[cysteine desulfurase] + A + AMP + 2 H(+)</text>
        <dbReference type="Rhea" id="RHEA:43340"/>
        <dbReference type="Rhea" id="RHEA-COMP:12157"/>
        <dbReference type="Rhea" id="RHEA-COMP:12158"/>
        <dbReference type="Rhea" id="RHEA-COMP:12910"/>
        <dbReference type="Rhea" id="RHEA-COMP:19908"/>
        <dbReference type="ChEBI" id="CHEBI:13193"/>
        <dbReference type="ChEBI" id="CHEBI:15378"/>
        <dbReference type="ChEBI" id="CHEBI:17499"/>
        <dbReference type="ChEBI" id="CHEBI:29950"/>
        <dbReference type="ChEBI" id="CHEBI:61963"/>
        <dbReference type="ChEBI" id="CHEBI:90618"/>
        <dbReference type="ChEBI" id="CHEBI:232372"/>
        <dbReference type="ChEBI" id="CHEBI:456215"/>
    </reaction>
</comment>
<comment type="pathway">
    <text evidence="1">Cofactor biosynthesis; thiamine diphosphate biosynthesis.</text>
</comment>
<comment type="subcellular location">
    <subcellularLocation>
        <location evidence="1">Cytoplasm</location>
    </subcellularLocation>
</comment>
<comment type="similarity">
    <text evidence="1">Belongs to the ThiI family.</text>
</comment>